<dbReference type="EMBL" id="DP000036">
    <property type="protein sequence ID" value="ABO52909.1"/>
    <property type="molecule type" value="Genomic_DNA"/>
</dbReference>
<dbReference type="RefSeq" id="NP_001162495.1">
    <property type="nucleotide sequence ID" value="NM_001169024.1"/>
</dbReference>
<dbReference type="SMR" id="A4K2M6"/>
<dbReference type="STRING" id="9555.ENSPANP00000017670"/>
<dbReference type="MEROPS" id="I17.003"/>
<dbReference type="Ensembl" id="ENSPANT00000009967.3">
    <property type="protein sequence ID" value="ENSPANP00000017670.1"/>
    <property type="gene ID" value="ENSPANG00000026136.3"/>
</dbReference>
<dbReference type="GeneID" id="100137512"/>
<dbReference type="KEGG" id="panu:100137512"/>
<dbReference type="CTD" id="128488"/>
<dbReference type="eggNOG" id="ENOG502TDXW">
    <property type="taxonomic scope" value="Eukaryota"/>
</dbReference>
<dbReference type="GeneTree" id="ENSGT00390000012286"/>
<dbReference type="HOGENOM" id="CLU_172659_0_0_1"/>
<dbReference type="OMA" id="CIKSDPP"/>
<dbReference type="OrthoDB" id="14788at314294"/>
<dbReference type="Proteomes" id="UP000028761">
    <property type="component" value="Chromosome 16"/>
</dbReference>
<dbReference type="Bgee" id="ENSPANG00000026136">
    <property type="expression patterns" value="Expressed in zone of skin and 3 other cell types or tissues"/>
</dbReference>
<dbReference type="GO" id="GO:0005576">
    <property type="term" value="C:extracellular region"/>
    <property type="evidence" value="ECO:0007669"/>
    <property type="project" value="UniProtKB-SubCell"/>
</dbReference>
<dbReference type="GO" id="GO:0004867">
    <property type="term" value="F:serine-type endopeptidase inhibitor activity"/>
    <property type="evidence" value="ECO:0007669"/>
    <property type="project" value="UniProtKB-KW"/>
</dbReference>
<dbReference type="GO" id="GO:0042742">
    <property type="term" value="P:defense response to bacterium"/>
    <property type="evidence" value="ECO:0007669"/>
    <property type="project" value="UniProtKB-KW"/>
</dbReference>
<dbReference type="FunFam" id="4.10.75.10:FF:000005">
    <property type="entry name" value="WAP four-disulfide core domain protein 12"/>
    <property type="match status" value="1"/>
</dbReference>
<dbReference type="Gene3D" id="4.10.75.10">
    <property type="entry name" value="Elafin-like"/>
    <property type="match status" value="1"/>
</dbReference>
<dbReference type="InterPro" id="IPR036645">
    <property type="entry name" value="Elafin-like_sf"/>
</dbReference>
<dbReference type="InterPro" id="IPR008197">
    <property type="entry name" value="WAP_dom"/>
</dbReference>
<dbReference type="Pfam" id="PF00095">
    <property type="entry name" value="WAP"/>
    <property type="match status" value="1"/>
</dbReference>
<dbReference type="PRINTS" id="PR00003">
    <property type="entry name" value="4DISULPHCORE"/>
</dbReference>
<dbReference type="SMART" id="SM00217">
    <property type="entry name" value="WAP"/>
    <property type="match status" value="1"/>
</dbReference>
<dbReference type="SUPFAM" id="SSF57256">
    <property type="entry name" value="Elafin-like"/>
    <property type="match status" value="1"/>
</dbReference>
<dbReference type="PROSITE" id="PS51390">
    <property type="entry name" value="WAP"/>
    <property type="match status" value="1"/>
</dbReference>
<name>WFD12_PAPAN</name>
<keyword id="KW-0044">Antibiotic</keyword>
<keyword id="KW-0929">Antimicrobial</keyword>
<keyword id="KW-1015">Disulfide bond</keyword>
<keyword id="KW-0646">Protease inhibitor</keyword>
<keyword id="KW-1185">Reference proteome</keyword>
<keyword id="KW-0964">Secreted</keyword>
<keyword id="KW-0722">Serine protease inhibitor</keyword>
<keyword id="KW-0732">Signal</keyword>
<protein>
    <recommendedName>
        <fullName>WAP four-disulfide core domain protein 12</fullName>
    </recommendedName>
</protein>
<proteinExistence type="inferred from homology"/>
<gene>
    <name type="primary">WFDC12</name>
</gene>
<sequence>MGSSSFLVLTVSLALVTLVAAEGVKGGIEKAGVCPADNVRCFKSDPPQCHTDQDCLGARKCCYLHCGFKCVIPVKKLEEGGNKDEDVSGPCPEPGWEAKSPGSSSTGCPQK</sequence>
<reference key="1">
    <citation type="journal article" date="2007" name="Genome Res.">
        <title>Comparative sequence analyses reveal rapid and divergent evolutionary changes of the WFDC locus in the primate lineage.</title>
        <authorList>
            <consortium name="NISC comparative sequencing program"/>
            <person name="Hurle B."/>
            <person name="Swanson W."/>
            <person name="Green E.D."/>
        </authorList>
    </citation>
    <scope>NUCLEOTIDE SEQUENCE [GENOMIC DNA]</scope>
</reference>
<accession>A4K2M6</accession>
<organism>
    <name type="scientific">Papio anubis</name>
    <name type="common">Olive baboon</name>
    <dbReference type="NCBI Taxonomy" id="9555"/>
    <lineage>
        <taxon>Eukaryota</taxon>
        <taxon>Metazoa</taxon>
        <taxon>Chordata</taxon>
        <taxon>Craniata</taxon>
        <taxon>Vertebrata</taxon>
        <taxon>Euteleostomi</taxon>
        <taxon>Mammalia</taxon>
        <taxon>Eutheria</taxon>
        <taxon>Euarchontoglires</taxon>
        <taxon>Primates</taxon>
        <taxon>Haplorrhini</taxon>
        <taxon>Catarrhini</taxon>
        <taxon>Cercopithecidae</taxon>
        <taxon>Cercopithecinae</taxon>
        <taxon>Papio</taxon>
    </lineage>
</organism>
<evidence type="ECO:0000250" key="1"/>
<evidence type="ECO:0000255" key="2"/>
<evidence type="ECO:0000255" key="3">
    <source>
        <dbReference type="PROSITE-ProRule" id="PRU00722"/>
    </source>
</evidence>
<evidence type="ECO:0000256" key="4">
    <source>
        <dbReference type="SAM" id="MobiDB-lite"/>
    </source>
</evidence>
<evidence type="ECO:0000305" key="5"/>
<comment type="function">
    <text evidence="1">Antibacterial protein. Putative acid-stable proteinase inhibitor (By similarity).</text>
</comment>
<comment type="subcellular location">
    <subcellularLocation>
        <location evidence="5">Secreted</location>
    </subcellularLocation>
</comment>
<feature type="signal peptide" evidence="2">
    <location>
        <begin position="1"/>
        <end position="23"/>
    </location>
</feature>
<feature type="chain" id="PRO_0000289653" description="WAP four-disulfide core domain protein 12">
    <location>
        <begin position="24"/>
        <end position="111"/>
    </location>
</feature>
<feature type="domain" description="WAP" evidence="3">
    <location>
        <begin position="27"/>
        <end position="74"/>
    </location>
</feature>
<feature type="region of interest" description="Disordered" evidence="4">
    <location>
        <begin position="80"/>
        <end position="111"/>
    </location>
</feature>
<feature type="compositionally biased region" description="Polar residues" evidence="4">
    <location>
        <begin position="101"/>
        <end position="111"/>
    </location>
</feature>
<feature type="disulfide bond" evidence="3">
    <location>
        <begin position="34"/>
        <end position="62"/>
    </location>
</feature>
<feature type="disulfide bond" evidence="3">
    <location>
        <begin position="41"/>
        <end position="66"/>
    </location>
</feature>
<feature type="disulfide bond" evidence="3">
    <location>
        <begin position="49"/>
        <end position="61"/>
    </location>
</feature>
<feature type="disulfide bond" evidence="3">
    <location>
        <begin position="55"/>
        <end position="70"/>
    </location>
</feature>